<feature type="chain" id="PRO_1000199476" description="Serine--tRNA ligase">
    <location>
        <begin position="1"/>
        <end position="430"/>
    </location>
</feature>
<feature type="binding site" evidence="1">
    <location>
        <begin position="237"/>
        <end position="239"/>
    </location>
    <ligand>
        <name>L-serine</name>
        <dbReference type="ChEBI" id="CHEBI:33384"/>
    </ligand>
</feature>
<feature type="binding site" evidence="1">
    <location>
        <begin position="268"/>
        <end position="270"/>
    </location>
    <ligand>
        <name>ATP</name>
        <dbReference type="ChEBI" id="CHEBI:30616"/>
    </ligand>
</feature>
<feature type="binding site" evidence="1">
    <location>
        <position position="291"/>
    </location>
    <ligand>
        <name>L-serine</name>
        <dbReference type="ChEBI" id="CHEBI:33384"/>
    </ligand>
</feature>
<feature type="binding site" evidence="1">
    <location>
        <begin position="355"/>
        <end position="358"/>
    </location>
    <ligand>
        <name>ATP</name>
        <dbReference type="ChEBI" id="CHEBI:30616"/>
    </ligand>
</feature>
<feature type="binding site" evidence="1">
    <location>
        <position position="391"/>
    </location>
    <ligand>
        <name>L-serine</name>
        <dbReference type="ChEBI" id="CHEBI:33384"/>
    </ligand>
</feature>
<gene>
    <name evidence="1" type="primary">serS</name>
    <name type="ordered locus">EC55989_0938</name>
</gene>
<proteinExistence type="inferred from homology"/>
<protein>
    <recommendedName>
        <fullName evidence="1">Serine--tRNA ligase</fullName>
        <ecNumber evidence="1">6.1.1.11</ecNumber>
    </recommendedName>
    <alternativeName>
        <fullName evidence="1">Seryl-tRNA synthetase</fullName>
        <shortName evidence="1">SerRS</shortName>
    </alternativeName>
    <alternativeName>
        <fullName evidence="1">Seryl-tRNA(Ser/Sec) synthetase</fullName>
    </alternativeName>
</protein>
<reference key="1">
    <citation type="journal article" date="2009" name="PLoS Genet.">
        <title>Organised genome dynamics in the Escherichia coli species results in highly diverse adaptive paths.</title>
        <authorList>
            <person name="Touchon M."/>
            <person name="Hoede C."/>
            <person name="Tenaillon O."/>
            <person name="Barbe V."/>
            <person name="Baeriswyl S."/>
            <person name="Bidet P."/>
            <person name="Bingen E."/>
            <person name="Bonacorsi S."/>
            <person name="Bouchier C."/>
            <person name="Bouvet O."/>
            <person name="Calteau A."/>
            <person name="Chiapello H."/>
            <person name="Clermont O."/>
            <person name="Cruveiller S."/>
            <person name="Danchin A."/>
            <person name="Diard M."/>
            <person name="Dossat C."/>
            <person name="Karoui M.E."/>
            <person name="Frapy E."/>
            <person name="Garry L."/>
            <person name="Ghigo J.M."/>
            <person name="Gilles A.M."/>
            <person name="Johnson J."/>
            <person name="Le Bouguenec C."/>
            <person name="Lescat M."/>
            <person name="Mangenot S."/>
            <person name="Martinez-Jehanne V."/>
            <person name="Matic I."/>
            <person name="Nassif X."/>
            <person name="Oztas S."/>
            <person name="Petit M.A."/>
            <person name="Pichon C."/>
            <person name="Rouy Z."/>
            <person name="Ruf C.S."/>
            <person name="Schneider D."/>
            <person name="Tourret J."/>
            <person name="Vacherie B."/>
            <person name="Vallenet D."/>
            <person name="Medigue C."/>
            <person name="Rocha E.P.C."/>
            <person name="Denamur E."/>
        </authorList>
    </citation>
    <scope>NUCLEOTIDE SEQUENCE [LARGE SCALE GENOMIC DNA]</scope>
    <source>
        <strain>55989 / EAEC</strain>
    </source>
</reference>
<name>SYS_ECO55</name>
<comment type="function">
    <text evidence="1">Catalyzes the attachment of serine to tRNA(Ser). Is also able to aminoacylate tRNA(Sec) with serine, to form the misacylated tRNA L-seryl-tRNA(Sec), which will be further converted into selenocysteinyl-tRNA(Sec).</text>
</comment>
<comment type="catalytic activity">
    <reaction evidence="1">
        <text>tRNA(Ser) + L-serine + ATP = L-seryl-tRNA(Ser) + AMP + diphosphate + H(+)</text>
        <dbReference type="Rhea" id="RHEA:12292"/>
        <dbReference type="Rhea" id="RHEA-COMP:9669"/>
        <dbReference type="Rhea" id="RHEA-COMP:9703"/>
        <dbReference type="ChEBI" id="CHEBI:15378"/>
        <dbReference type="ChEBI" id="CHEBI:30616"/>
        <dbReference type="ChEBI" id="CHEBI:33019"/>
        <dbReference type="ChEBI" id="CHEBI:33384"/>
        <dbReference type="ChEBI" id="CHEBI:78442"/>
        <dbReference type="ChEBI" id="CHEBI:78533"/>
        <dbReference type="ChEBI" id="CHEBI:456215"/>
        <dbReference type="EC" id="6.1.1.11"/>
    </reaction>
</comment>
<comment type="catalytic activity">
    <reaction evidence="1">
        <text>tRNA(Sec) + L-serine + ATP = L-seryl-tRNA(Sec) + AMP + diphosphate + H(+)</text>
        <dbReference type="Rhea" id="RHEA:42580"/>
        <dbReference type="Rhea" id="RHEA-COMP:9742"/>
        <dbReference type="Rhea" id="RHEA-COMP:10128"/>
        <dbReference type="ChEBI" id="CHEBI:15378"/>
        <dbReference type="ChEBI" id="CHEBI:30616"/>
        <dbReference type="ChEBI" id="CHEBI:33019"/>
        <dbReference type="ChEBI" id="CHEBI:33384"/>
        <dbReference type="ChEBI" id="CHEBI:78442"/>
        <dbReference type="ChEBI" id="CHEBI:78533"/>
        <dbReference type="ChEBI" id="CHEBI:456215"/>
        <dbReference type="EC" id="6.1.1.11"/>
    </reaction>
</comment>
<comment type="pathway">
    <text evidence="1">Aminoacyl-tRNA biosynthesis; selenocysteinyl-tRNA(Sec) biosynthesis; L-seryl-tRNA(Sec) from L-serine and tRNA(Sec): step 1/1.</text>
</comment>
<comment type="subunit">
    <text evidence="1">Homodimer. The tRNA molecule binds across the dimer.</text>
</comment>
<comment type="subcellular location">
    <subcellularLocation>
        <location evidence="1">Cytoplasm</location>
    </subcellularLocation>
</comment>
<comment type="domain">
    <text evidence="1">Consists of two distinct domains, a catalytic core and a N-terminal extension that is involved in tRNA binding.</text>
</comment>
<comment type="similarity">
    <text evidence="1">Belongs to the class-II aminoacyl-tRNA synthetase family. Type-1 seryl-tRNA synthetase subfamily.</text>
</comment>
<accession>B7LD85</accession>
<dbReference type="EC" id="6.1.1.11" evidence="1"/>
<dbReference type="EMBL" id="CU928145">
    <property type="protein sequence ID" value="CAU96802.1"/>
    <property type="molecule type" value="Genomic_DNA"/>
</dbReference>
<dbReference type="RefSeq" id="WP_000886683.1">
    <property type="nucleotide sequence ID" value="NZ_CP028304.1"/>
</dbReference>
<dbReference type="SMR" id="B7LD85"/>
<dbReference type="GeneID" id="93776527"/>
<dbReference type="KEGG" id="eck:EC55989_0938"/>
<dbReference type="HOGENOM" id="CLU_023797_1_1_6"/>
<dbReference type="UniPathway" id="UPA00906">
    <property type="reaction ID" value="UER00895"/>
</dbReference>
<dbReference type="Proteomes" id="UP000000746">
    <property type="component" value="Chromosome"/>
</dbReference>
<dbReference type="GO" id="GO:0005737">
    <property type="term" value="C:cytoplasm"/>
    <property type="evidence" value="ECO:0007669"/>
    <property type="project" value="UniProtKB-SubCell"/>
</dbReference>
<dbReference type="GO" id="GO:0005524">
    <property type="term" value="F:ATP binding"/>
    <property type="evidence" value="ECO:0007669"/>
    <property type="project" value="UniProtKB-UniRule"/>
</dbReference>
<dbReference type="GO" id="GO:0004828">
    <property type="term" value="F:serine-tRNA ligase activity"/>
    <property type="evidence" value="ECO:0007669"/>
    <property type="project" value="UniProtKB-UniRule"/>
</dbReference>
<dbReference type="GO" id="GO:0016260">
    <property type="term" value="P:selenocysteine biosynthetic process"/>
    <property type="evidence" value="ECO:0007669"/>
    <property type="project" value="UniProtKB-UniRule"/>
</dbReference>
<dbReference type="GO" id="GO:0006434">
    <property type="term" value="P:seryl-tRNA aminoacylation"/>
    <property type="evidence" value="ECO:0007669"/>
    <property type="project" value="UniProtKB-UniRule"/>
</dbReference>
<dbReference type="CDD" id="cd00770">
    <property type="entry name" value="SerRS_core"/>
    <property type="match status" value="1"/>
</dbReference>
<dbReference type="FunFam" id="1.10.287.40:FF:000001">
    <property type="entry name" value="Serine--tRNA ligase"/>
    <property type="match status" value="1"/>
</dbReference>
<dbReference type="FunFam" id="3.30.930.10:FF:000018">
    <property type="entry name" value="Serine--tRNA ligase"/>
    <property type="match status" value="1"/>
</dbReference>
<dbReference type="Gene3D" id="3.30.930.10">
    <property type="entry name" value="Bira Bifunctional Protein, Domain 2"/>
    <property type="match status" value="1"/>
</dbReference>
<dbReference type="Gene3D" id="1.10.287.40">
    <property type="entry name" value="Serine-tRNA synthetase, tRNA binding domain"/>
    <property type="match status" value="1"/>
</dbReference>
<dbReference type="HAMAP" id="MF_00176">
    <property type="entry name" value="Ser_tRNA_synth_type1"/>
    <property type="match status" value="1"/>
</dbReference>
<dbReference type="InterPro" id="IPR002314">
    <property type="entry name" value="aa-tRNA-synt_IIb"/>
</dbReference>
<dbReference type="InterPro" id="IPR006195">
    <property type="entry name" value="aa-tRNA-synth_II"/>
</dbReference>
<dbReference type="InterPro" id="IPR045864">
    <property type="entry name" value="aa-tRNA-synth_II/BPL/LPL"/>
</dbReference>
<dbReference type="InterPro" id="IPR002317">
    <property type="entry name" value="Ser-tRNA-ligase_type_1"/>
</dbReference>
<dbReference type="InterPro" id="IPR015866">
    <property type="entry name" value="Ser-tRNA-synth_1_N"/>
</dbReference>
<dbReference type="InterPro" id="IPR042103">
    <property type="entry name" value="SerRS_1_N_sf"/>
</dbReference>
<dbReference type="InterPro" id="IPR033729">
    <property type="entry name" value="SerRS_core"/>
</dbReference>
<dbReference type="InterPro" id="IPR010978">
    <property type="entry name" value="tRNA-bd_arm"/>
</dbReference>
<dbReference type="NCBIfam" id="TIGR00414">
    <property type="entry name" value="serS"/>
    <property type="match status" value="1"/>
</dbReference>
<dbReference type="PANTHER" id="PTHR43697:SF1">
    <property type="entry name" value="SERINE--TRNA LIGASE"/>
    <property type="match status" value="1"/>
</dbReference>
<dbReference type="PANTHER" id="PTHR43697">
    <property type="entry name" value="SERYL-TRNA SYNTHETASE"/>
    <property type="match status" value="1"/>
</dbReference>
<dbReference type="Pfam" id="PF02403">
    <property type="entry name" value="Seryl_tRNA_N"/>
    <property type="match status" value="1"/>
</dbReference>
<dbReference type="Pfam" id="PF00587">
    <property type="entry name" value="tRNA-synt_2b"/>
    <property type="match status" value="1"/>
</dbReference>
<dbReference type="PIRSF" id="PIRSF001529">
    <property type="entry name" value="Ser-tRNA-synth_IIa"/>
    <property type="match status" value="1"/>
</dbReference>
<dbReference type="PRINTS" id="PR00981">
    <property type="entry name" value="TRNASYNTHSER"/>
</dbReference>
<dbReference type="SUPFAM" id="SSF55681">
    <property type="entry name" value="Class II aaRS and biotin synthetases"/>
    <property type="match status" value="1"/>
</dbReference>
<dbReference type="SUPFAM" id="SSF46589">
    <property type="entry name" value="tRNA-binding arm"/>
    <property type="match status" value="1"/>
</dbReference>
<dbReference type="PROSITE" id="PS50862">
    <property type="entry name" value="AA_TRNA_LIGASE_II"/>
    <property type="match status" value="1"/>
</dbReference>
<sequence>MLDPNLLRNEPDAVAEKLARRGFKLDVDKLGALEERRKVLQVKTENLQAERNSRSKSIGQAKARGEDIEPLRLEVNKLGEELDAAKAELDALQAEIRDIALTIPNLPADEVPVGKDENDNVEVSRWGTPREFDFEVRDHVTLGEMHSGLDFAAAVKLTGSRFVVMKGQIARMHRALSQFMLDLHTEQHGYSENYVPYLVNQDTLYGTGQLPKFAGDLFHTRPLEEEADTSNYALIPTAEVPLTNLVRGEIIDEDDLPIKMTAHTPCFRSEAGSYGRDTRGLIRMHQFDKVEMVQIVRPEDSMAALEEMTGHAEKVLQLLGLPYRKIILCTGDMGFGACKTYDLEVWIPAQNTYREISSCSNVWDFQARRMQARCRSKSDKKTRLVHTLNGSGLAVGRTLVAVMENYQQADGRIEVPEVLRPYMNGLEYIG</sequence>
<evidence type="ECO:0000255" key="1">
    <source>
        <dbReference type="HAMAP-Rule" id="MF_00176"/>
    </source>
</evidence>
<keyword id="KW-0030">Aminoacyl-tRNA synthetase</keyword>
<keyword id="KW-0067">ATP-binding</keyword>
<keyword id="KW-0963">Cytoplasm</keyword>
<keyword id="KW-0436">Ligase</keyword>
<keyword id="KW-0547">Nucleotide-binding</keyword>
<keyword id="KW-0648">Protein biosynthesis</keyword>
<keyword id="KW-1185">Reference proteome</keyword>
<organism>
    <name type="scientific">Escherichia coli (strain 55989 / EAEC)</name>
    <dbReference type="NCBI Taxonomy" id="585055"/>
    <lineage>
        <taxon>Bacteria</taxon>
        <taxon>Pseudomonadati</taxon>
        <taxon>Pseudomonadota</taxon>
        <taxon>Gammaproteobacteria</taxon>
        <taxon>Enterobacterales</taxon>
        <taxon>Enterobacteriaceae</taxon>
        <taxon>Escherichia</taxon>
    </lineage>
</organism>